<protein>
    <recommendedName>
        <fullName evidence="1">Dihydroorotate dehydrogenase (quinone)</fullName>
        <ecNumber evidence="1">1.3.5.2</ecNumber>
    </recommendedName>
    <alternativeName>
        <fullName evidence="1">DHOdehase</fullName>
        <shortName evidence="1">DHOD</shortName>
        <shortName evidence="1">DHODase</shortName>
    </alternativeName>
    <alternativeName>
        <fullName evidence="1">Dihydroorotate oxidase</fullName>
    </alternativeName>
</protein>
<organism>
    <name type="scientific">Yersinia pseudotuberculosis serotype O:3 (strain YPIII)</name>
    <dbReference type="NCBI Taxonomy" id="502800"/>
    <lineage>
        <taxon>Bacteria</taxon>
        <taxon>Pseudomonadati</taxon>
        <taxon>Pseudomonadota</taxon>
        <taxon>Gammaproteobacteria</taxon>
        <taxon>Enterobacterales</taxon>
        <taxon>Yersiniaceae</taxon>
        <taxon>Yersinia</taxon>
    </lineage>
</organism>
<feature type="chain" id="PRO_1000100302" description="Dihydroorotate dehydrogenase (quinone)">
    <location>
        <begin position="1"/>
        <end position="336"/>
    </location>
</feature>
<feature type="active site" description="Nucleophile" evidence="1">
    <location>
        <position position="175"/>
    </location>
</feature>
<feature type="binding site" evidence="1">
    <location>
        <begin position="62"/>
        <end position="66"/>
    </location>
    <ligand>
        <name>FMN</name>
        <dbReference type="ChEBI" id="CHEBI:58210"/>
    </ligand>
</feature>
<feature type="binding site" evidence="1">
    <location>
        <position position="66"/>
    </location>
    <ligand>
        <name>substrate</name>
    </ligand>
</feature>
<feature type="binding site" evidence="1">
    <location>
        <position position="86"/>
    </location>
    <ligand>
        <name>FMN</name>
        <dbReference type="ChEBI" id="CHEBI:58210"/>
    </ligand>
</feature>
<feature type="binding site" evidence="1">
    <location>
        <begin position="111"/>
        <end position="115"/>
    </location>
    <ligand>
        <name>substrate</name>
    </ligand>
</feature>
<feature type="binding site" evidence="1">
    <location>
        <position position="139"/>
    </location>
    <ligand>
        <name>FMN</name>
        <dbReference type="ChEBI" id="CHEBI:58210"/>
    </ligand>
</feature>
<feature type="binding site" evidence="1">
    <location>
        <position position="172"/>
    </location>
    <ligand>
        <name>FMN</name>
        <dbReference type="ChEBI" id="CHEBI:58210"/>
    </ligand>
</feature>
<feature type="binding site" evidence="1">
    <location>
        <position position="172"/>
    </location>
    <ligand>
        <name>substrate</name>
    </ligand>
</feature>
<feature type="binding site" evidence="1">
    <location>
        <position position="177"/>
    </location>
    <ligand>
        <name>substrate</name>
    </ligand>
</feature>
<feature type="binding site" evidence="1">
    <location>
        <position position="217"/>
    </location>
    <ligand>
        <name>FMN</name>
        <dbReference type="ChEBI" id="CHEBI:58210"/>
    </ligand>
</feature>
<feature type="binding site" evidence="1">
    <location>
        <position position="245"/>
    </location>
    <ligand>
        <name>FMN</name>
        <dbReference type="ChEBI" id="CHEBI:58210"/>
    </ligand>
</feature>
<feature type="binding site" evidence="1">
    <location>
        <begin position="246"/>
        <end position="247"/>
    </location>
    <ligand>
        <name>substrate</name>
    </ligand>
</feature>
<feature type="binding site" evidence="1">
    <location>
        <position position="268"/>
    </location>
    <ligand>
        <name>FMN</name>
        <dbReference type="ChEBI" id="CHEBI:58210"/>
    </ligand>
</feature>
<feature type="binding site" evidence="1">
    <location>
        <position position="297"/>
    </location>
    <ligand>
        <name>FMN</name>
        <dbReference type="ChEBI" id="CHEBI:58210"/>
    </ligand>
</feature>
<feature type="binding site" evidence="1">
    <location>
        <begin position="318"/>
        <end position="319"/>
    </location>
    <ligand>
        <name>FMN</name>
        <dbReference type="ChEBI" id="CHEBI:58210"/>
    </ligand>
</feature>
<name>PYRD_YERPY</name>
<proteinExistence type="inferred from homology"/>
<sequence>MYYPLVRKALFQLDPERAHELTFRQLKRVSGTPLEFLVRQSVPTKPVSCMGLSFKNPVGLAAGLDKDGECIDALGAMGFGFIEVGTVTPRPQVGNDKPRLFRIVEAEGLINRMGFNNHGVDNLIENVKKSHFGGILGINIGKNKDTPVEQGKEDYLICMDKIYPYAGYIAINISSPNTPGLRSLQYGEALDDLLAAIKDKQTELHQRHHKYVPVAVKIAPDLTEEELIQIADSLVRHNIDGVIATNTTLDRSLIQGLNYCEQAGGLSGRPLQLRSTEVIHRLSQELKGRLPIIGVGGIDSVTAAREKMAAGASLIQIYSGFIFRGPGLIKNIVTHI</sequence>
<gene>
    <name evidence="1" type="primary">pyrD</name>
    <name type="ordered locus">YPK_2644</name>
</gene>
<accession>B1JQS0</accession>
<dbReference type="EC" id="1.3.5.2" evidence="1"/>
<dbReference type="EMBL" id="CP000950">
    <property type="protein sequence ID" value="ACA68921.1"/>
    <property type="molecule type" value="Genomic_DNA"/>
</dbReference>
<dbReference type="RefSeq" id="WP_002211296.1">
    <property type="nucleotide sequence ID" value="NZ_CP009792.1"/>
</dbReference>
<dbReference type="SMR" id="B1JQS0"/>
<dbReference type="GeneID" id="57977211"/>
<dbReference type="KEGG" id="ypy:YPK_2644"/>
<dbReference type="PATRIC" id="fig|502800.11.peg.3343"/>
<dbReference type="UniPathway" id="UPA00070">
    <property type="reaction ID" value="UER00946"/>
</dbReference>
<dbReference type="GO" id="GO:0005737">
    <property type="term" value="C:cytoplasm"/>
    <property type="evidence" value="ECO:0007669"/>
    <property type="project" value="InterPro"/>
</dbReference>
<dbReference type="GO" id="GO:0005886">
    <property type="term" value="C:plasma membrane"/>
    <property type="evidence" value="ECO:0007669"/>
    <property type="project" value="UniProtKB-SubCell"/>
</dbReference>
<dbReference type="GO" id="GO:0106430">
    <property type="term" value="F:dihydroorotate dehydrogenase (quinone) activity"/>
    <property type="evidence" value="ECO:0007669"/>
    <property type="project" value="UniProtKB-EC"/>
</dbReference>
<dbReference type="GO" id="GO:0006207">
    <property type="term" value="P:'de novo' pyrimidine nucleobase biosynthetic process"/>
    <property type="evidence" value="ECO:0007669"/>
    <property type="project" value="InterPro"/>
</dbReference>
<dbReference type="GO" id="GO:0044205">
    <property type="term" value="P:'de novo' UMP biosynthetic process"/>
    <property type="evidence" value="ECO:0007669"/>
    <property type="project" value="UniProtKB-UniRule"/>
</dbReference>
<dbReference type="CDD" id="cd04738">
    <property type="entry name" value="DHOD_2_like"/>
    <property type="match status" value="1"/>
</dbReference>
<dbReference type="FunFam" id="3.20.20.70:FF:000028">
    <property type="entry name" value="Dihydroorotate dehydrogenase (quinone)"/>
    <property type="match status" value="1"/>
</dbReference>
<dbReference type="Gene3D" id="3.20.20.70">
    <property type="entry name" value="Aldolase class I"/>
    <property type="match status" value="1"/>
</dbReference>
<dbReference type="HAMAP" id="MF_00225">
    <property type="entry name" value="DHO_dh_type2"/>
    <property type="match status" value="1"/>
</dbReference>
<dbReference type="InterPro" id="IPR013785">
    <property type="entry name" value="Aldolase_TIM"/>
</dbReference>
<dbReference type="InterPro" id="IPR050074">
    <property type="entry name" value="DHO_dehydrogenase"/>
</dbReference>
<dbReference type="InterPro" id="IPR012135">
    <property type="entry name" value="Dihydroorotate_DH_1_2"/>
</dbReference>
<dbReference type="InterPro" id="IPR005719">
    <property type="entry name" value="Dihydroorotate_DH_2"/>
</dbReference>
<dbReference type="InterPro" id="IPR005720">
    <property type="entry name" value="Dihydroorotate_DH_cat"/>
</dbReference>
<dbReference type="InterPro" id="IPR001295">
    <property type="entry name" value="Dihydroorotate_DH_CS"/>
</dbReference>
<dbReference type="NCBIfam" id="NF003644">
    <property type="entry name" value="PRK05286.1-1"/>
    <property type="match status" value="1"/>
</dbReference>
<dbReference type="NCBIfam" id="NF003645">
    <property type="entry name" value="PRK05286.1-2"/>
    <property type="match status" value="1"/>
</dbReference>
<dbReference type="NCBIfam" id="NF003646">
    <property type="entry name" value="PRK05286.1-4"/>
    <property type="match status" value="1"/>
</dbReference>
<dbReference type="NCBIfam" id="NF003652">
    <property type="entry name" value="PRK05286.2-5"/>
    <property type="match status" value="1"/>
</dbReference>
<dbReference type="NCBIfam" id="TIGR01036">
    <property type="entry name" value="pyrD_sub2"/>
    <property type="match status" value="1"/>
</dbReference>
<dbReference type="PANTHER" id="PTHR48109:SF4">
    <property type="entry name" value="DIHYDROOROTATE DEHYDROGENASE (QUINONE), MITOCHONDRIAL"/>
    <property type="match status" value="1"/>
</dbReference>
<dbReference type="PANTHER" id="PTHR48109">
    <property type="entry name" value="DIHYDROOROTATE DEHYDROGENASE (QUINONE), MITOCHONDRIAL-RELATED"/>
    <property type="match status" value="1"/>
</dbReference>
<dbReference type="Pfam" id="PF01180">
    <property type="entry name" value="DHO_dh"/>
    <property type="match status" value="1"/>
</dbReference>
<dbReference type="PIRSF" id="PIRSF000164">
    <property type="entry name" value="DHO_oxidase"/>
    <property type="match status" value="1"/>
</dbReference>
<dbReference type="SUPFAM" id="SSF51395">
    <property type="entry name" value="FMN-linked oxidoreductases"/>
    <property type="match status" value="1"/>
</dbReference>
<dbReference type="PROSITE" id="PS00911">
    <property type="entry name" value="DHODEHASE_1"/>
    <property type="match status" value="1"/>
</dbReference>
<dbReference type="PROSITE" id="PS00912">
    <property type="entry name" value="DHODEHASE_2"/>
    <property type="match status" value="1"/>
</dbReference>
<comment type="function">
    <text evidence="1">Catalyzes the conversion of dihydroorotate to orotate with quinone as electron acceptor.</text>
</comment>
<comment type="catalytic activity">
    <reaction evidence="1">
        <text>(S)-dihydroorotate + a quinone = orotate + a quinol</text>
        <dbReference type="Rhea" id="RHEA:30187"/>
        <dbReference type="ChEBI" id="CHEBI:24646"/>
        <dbReference type="ChEBI" id="CHEBI:30839"/>
        <dbReference type="ChEBI" id="CHEBI:30864"/>
        <dbReference type="ChEBI" id="CHEBI:132124"/>
        <dbReference type="EC" id="1.3.5.2"/>
    </reaction>
</comment>
<comment type="cofactor">
    <cofactor evidence="1">
        <name>FMN</name>
        <dbReference type="ChEBI" id="CHEBI:58210"/>
    </cofactor>
    <text evidence="1">Binds 1 FMN per subunit.</text>
</comment>
<comment type="pathway">
    <text evidence="1">Pyrimidine metabolism; UMP biosynthesis via de novo pathway; orotate from (S)-dihydroorotate (quinone route): step 1/1.</text>
</comment>
<comment type="subunit">
    <text evidence="1">Monomer.</text>
</comment>
<comment type="subcellular location">
    <subcellularLocation>
        <location evidence="1">Cell membrane</location>
        <topology evidence="1">Peripheral membrane protein</topology>
    </subcellularLocation>
</comment>
<comment type="similarity">
    <text evidence="1">Belongs to the dihydroorotate dehydrogenase family. Type 2 subfamily.</text>
</comment>
<keyword id="KW-1003">Cell membrane</keyword>
<keyword id="KW-0285">Flavoprotein</keyword>
<keyword id="KW-0288">FMN</keyword>
<keyword id="KW-0472">Membrane</keyword>
<keyword id="KW-0560">Oxidoreductase</keyword>
<keyword id="KW-0665">Pyrimidine biosynthesis</keyword>
<evidence type="ECO:0000255" key="1">
    <source>
        <dbReference type="HAMAP-Rule" id="MF_00225"/>
    </source>
</evidence>
<reference key="1">
    <citation type="submission" date="2008-02" db="EMBL/GenBank/DDBJ databases">
        <title>Complete sequence of Yersinia pseudotuberculosis YPIII.</title>
        <authorList>
            <consortium name="US DOE Joint Genome Institute"/>
            <person name="Copeland A."/>
            <person name="Lucas S."/>
            <person name="Lapidus A."/>
            <person name="Glavina del Rio T."/>
            <person name="Dalin E."/>
            <person name="Tice H."/>
            <person name="Bruce D."/>
            <person name="Goodwin L."/>
            <person name="Pitluck S."/>
            <person name="Munk A.C."/>
            <person name="Brettin T."/>
            <person name="Detter J.C."/>
            <person name="Han C."/>
            <person name="Tapia R."/>
            <person name="Schmutz J."/>
            <person name="Larimer F."/>
            <person name="Land M."/>
            <person name="Hauser L."/>
            <person name="Challacombe J.F."/>
            <person name="Green L."/>
            <person name="Lindler L.E."/>
            <person name="Nikolich M.P."/>
            <person name="Richardson P."/>
        </authorList>
    </citation>
    <scope>NUCLEOTIDE SEQUENCE [LARGE SCALE GENOMIC DNA]</scope>
    <source>
        <strain>YPIII</strain>
    </source>
</reference>